<keyword id="KW-0028">Amino-acid biosynthesis</keyword>
<keyword id="KW-0055">Arginine biosynthesis</keyword>
<keyword id="KW-0067">ATP-binding</keyword>
<keyword id="KW-0963">Cytoplasm</keyword>
<keyword id="KW-0418">Kinase</keyword>
<keyword id="KW-0547">Nucleotide-binding</keyword>
<keyword id="KW-1185">Reference proteome</keyword>
<keyword id="KW-0808">Transferase</keyword>
<gene>
    <name evidence="1" type="primary">argB</name>
    <name type="ordered locus">Mhun_3230</name>
</gene>
<dbReference type="EC" id="2.7.2.8" evidence="1"/>
<dbReference type="EMBL" id="CP000254">
    <property type="protein sequence ID" value="ABD42912.1"/>
    <property type="molecule type" value="Genomic_DNA"/>
</dbReference>
<dbReference type="RefSeq" id="WP_011450157.1">
    <property type="nucleotide sequence ID" value="NC_007796.1"/>
</dbReference>
<dbReference type="SMR" id="Q2FTZ8"/>
<dbReference type="FunCoup" id="Q2FTZ8">
    <property type="interactions" value="114"/>
</dbReference>
<dbReference type="STRING" id="323259.Mhun_3230"/>
<dbReference type="EnsemblBacteria" id="ABD42912">
    <property type="protein sequence ID" value="ABD42912"/>
    <property type="gene ID" value="Mhun_3230"/>
</dbReference>
<dbReference type="GeneID" id="3922123"/>
<dbReference type="KEGG" id="mhu:Mhun_3230"/>
<dbReference type="eggNOG" id="arCOG00862">
    <property type="taxonomic scope" value="Archaea"/>
</dbReference>
<dbReference type="HOGENOM" id="CLU_053680_0_0_2"/>
<dbReference type="InParanoid" id="Q2FTZ8"/>
<dbReference type="OrthoDB" id="6816at2157"/>
<dbReference type="UniPathway" id="UPA00068">
    <property type="reaction ID" value="UER00107"/>
</dbReference>
<dbReference type="Proteomes" id="UP000001941">
    <property type="component" value="Chromosome"/>
</dbReference>
<dbReference type="GO" id="GO:0005737">
    <property type="term" value="C:cytoplasm"/>
    <property type="evidence" value="ECO:0007669"/>
    <property type="project" value="UniProtKB-SubCell"/>
</dbReference>
<dbReference type="GO" id="GO:0003991">
    <property type="term" value="F:acetylglutamate kinase activity"/>
    <property type="evidence" value="ECO:0007669"/>
    <property type="project" value="UniProtKB-UniRule"/>
</dbReference>
<dbReference type="GO" id="GO:0005524">
    <property type="term" value="F:ATP binding"/>
    <property type="evidence" value="ECO:0007669"/>
    <property type="project" value="UniProtKB-UniRule"/>
</dbReference>
<dbReference type="GO" id="GO:0042450">
    <property type="term" value="P:arginine biosynthetic process via ornithine"/>
    <property type="evidence" value="ECO:0007669"/>
    <property type="project" value="UniProtKB-UniRule"/>
</dbReference>
<dbReference type="GO" id="GO:0006526">
    <property type="term" value="P:L-arginine biosynthetic process"/>
    <property type="evidence" value="ECO:0007669"/>
    <property type="project" value="UniProtKB-UniPathway"/>
</dbReference>
<dbReference type="CDD" id="cd04250">
    <property type="entry name" value="AAK_NAGK-C"/>
    <property type="match status" value="1"/>
</dbReference>
<dbReference type="FunFam" id="3.40.1160.10:FF:000004">
    <property type="entry name" value="Acetylglutamate kinase"/>
    <property type="match status" value="1"/>
</dbReference>
<dbReference type="Gene3D" id="3.40.1160.10">
    <property type="entry name" value="Acetylglutamate kinase-like"/>
    <property type="match status" value="1"/>
</dbReference>
<dbReference type="HAMAP" id="MF_00082">
    <property type="entry name" value="ArgB"/>
    <property type="match status" value="1"/>
</dbReference>
<dbReference type="InterPro" id="IPR036393">
    <property type="entry name" value="AceGlu_kinase-like_sf"/>
</dbReference>
<dbReference type="InterPro" id="IPR004662">
    <property type="entry name" value="AcgluKinase_fam"/>
</dbReference>
<dbReference type="InterPro" id="IPR037528">
    <property type="entry name" value="ArgB"/>
</dbReference>
<dbReference type="InterPro" id="IPR001048">
    <property type="entry name" value="Asp/Glu/Uridylate_kinase"/>
</dbReference>
<dbReference type="InterPro" id="IPR001057">
    <property type="entry name" value="Glu/AcGlu_kinase"/>
</dbReference>
<dbReference type="InterPro" id="IPR041727">
    <property type="entry name" value="NAGK-C"/>
</dbReference>
<dbReference type="NCBIfam" id="TIGR00761">
    <property type="entry name" value="argB"/>
    <property type="match status" value="1"/>
</dbReference>
<dbReference type="PANTHER" id="PTHR23342">
    <property type="entry name" value="N-ACETYLGLUTAMATE SYNTHASE"/>
    <property type="match status" value="1"/>
</dbReference>
<dbReference type="PANTHER" id="PTHR23342:SF0">
    <property type="entry name" value="N-ACETYLGLUTAMATE SYNTHASE, MITOCHONDRIAL"/>
    <property type="match status" value="1"/>
</dbReference>
<dbReference type="Pfam" id="PF00696">
    <property type="entry name" value="AA_kinase"/>
    <property type="match status" value="1"/>
</dbReference>
<dbReference type="PIRSF" id="PIRSF000728">
    <property type="entry name" value="NAGK"/>
    <property type="match status" value="1"/>
</dbReference>
<dbReference type="PRINTS" id="PR00474">
    <property type="entry name" value="GLU5KINASE"/>
</dbReference>
<dbReference type="SUPFAM" id="SSF53633">
    <property type="entry name" value="Carbamate kinase-like"/>
    <property type="match status" value="1"/>
</dbReference>
<proteinExistence type="inferred from homology"/>
<name>ARGB_METHJ</name>
<organism>
    <name type="scientific">Methanospirillum hungatei JF-1 (strain ATCC 27890 / DSM 864 / NBRC 100397 / JF-1)</name>
    <dbReference type="NCBI Taxonomy" id="323259"/>
    <lineage>
        <taxon>Archaea</taxon>
        <taxon>Methanobacteriati</taxon>
        <taxon>Methanobacteriota</taxon>
        <taxon>Stenosarchaea group</taxon>
        <taxon>Methanomicrobia</taxon>
        <taxon>Methanomicrobiales</taxon>
        <taxon>Methanospirillaceae</taxon>
        <taxon>Methanospirillum</taxon>
    </lineage>
</organism>
<accession>Q2FTZ8</accession>
<reference key="1">
    <citation type="journal article" date="2016" name="Stand. Genomic Sci.">
        <title>Complete genome sequence of Methanospirillum hungatei type strain JF1.</title>
        <authorList>
            <person name="Gunsalus R.P."/>
            <person name="Cook L.E."/>
            <person name="Crable B."/>
            <person name="Rohlin L."/>
            <person name="McDonald E."/>
            <person name="Mouttaki H."/>
            <person name="Sieber J.R."/>
            <person name="Poweleit N."/>
            <person name="Zhou H."/>
            <person name="Lapidus A.L."/>
            <person name="Daligault H.E."/>
            <person name="Land M."/>
            <person name="Gilna P."/>
            <person name="Ivanova N."/>
            <person name="Kyrpides N."/>
            <person name="Culley D.E."/>
            <person name="McInerney M.J."/>
        </authorList>
    </citation>
    <scope>NUCLEOTIDE SEQUENCE [LARGE SCALE GENOMIC DNA]</scope>
    <source>
        <strain>ATCC 27890 / DSM 864 / NBRC 100397 / JF-1</strain>
    </source>
</reference>
<feature type="chain" id="PRO_0000264791" description="Acetylglutamate kinase">
    <location>
        <begin position="1"/>
        <end position="294"/>
    </location>
</feature>
<feature type="binding site" evidence="1">
    <location>
        <begin position="60"/>
        <end position="61"/>
    </location>
    <ligand>
        <name>substrate</name>
    </ligand>
</feature>
<feature type="binding site" evidence="1">
    <location>
        <position position="82"/>
    </location>
    <ligand>
        <name>substrate</name>
    </ligand>
</feature>
<feature type="binding site" evidence="1">
    <location>
        <position position="186"/>
    </location>
    <ligand>
        <name>substrate</name>
    </ligand>
</feature>
<feature type="site" description="Transition state stabilizer" evidence="1">
    <location>
        <position position="25"/>
    </location>
</feature>
<feature type="site" description="Transition state stabilizer" evidence="1">
    <location>
        <position position="247"/>
    </location>
</feature>
<evidence type="ECO:0000255" key="1">
    <source>
        <dbReference type="HAMAP-Rule" id="MF_00082"/>
    </source>
</evidence>
<sequence>MKREDVLMEALPYIQKFHGRSMVIKLGGHAMVDTCIMDTVIRDVVLLQLVGIKCVIVHGGGPEITEKMKAMGKQPRFVSGLRITDDDTLEVAQMVLVGKINSKIVSLVSRAGGRAVGISGNDANLIIARKMDRQKVRVENREEEVDLGHVGEIEEIRPALLHTLLDNQFIPVISPLAIDRNGNDLNINADTAAGELAIALGAHKLISMTDVDGIMNRERTEVYRRMTPQDAEELIASGVVSEGMIPKVLAVLRALHGGVPYAHIINGNLAHNLIMELFTAEGVGTMITDRIDEV</sequence>
<comment type="function">
    <text evidence="1">Catalyzes the ATP-dependent phosphorylation of N-acetyl-L-glutamate.</text>
</comment>
<comment type="catalytic activity">
    <reaction evidence="1">
        <text>N-acetyl-L-glutamate + ATP = N-acetyl-L-glutamyl 5-phosphate + ADP</text>
        <dbReference type="Rhea" id="RHEA:14629"/>
        <dbReference type="ChEBI" id="CHEBI:30616"/>
        <dbReference type="ChEBI" id="CHEBI:44337"/>
        <dbReference type="ChEBI" id="CHEBI:57936"/>
        <dbReference type="ChEBI" id="CHEBI:456216"/>
        <dbReference type="EC" id="2.7.2.8"/>
    </reaction>
</comment>
<comment type="pathway">
    <text evidence="1">Amino-acid biosynthesis; L-arginine biosynthesis; N(2)-acetyl-L-ornithine from L-glutamate: step 2/4.</text>
</comment>
<comment type="subcellular location">
    <subcellularLocation>
        <location evidence="1">Cytoplasm</location>
    </subcellularLocation>
</comment>
<comment type="similarity">
    <text evidence="1">Belongs to the acetylglutamate kinase family. ArgB subfamily.</text>
</comment>
<protein>
    <recommendedName>
        <fullName evidence="1">Acetylglutamate kinase</fullName>
        <ecNumber evidence="1">2.7.2.8</ecNumber>
    </recommendedName>
    <alternativeName>
        <fullName evidence="1">N-acetyl-L-glutamate 5-phosphotransferase</fullName>
    </alternativeName>
    <alternativeName>
        <fullName evidence="1">NAG kinase</fullName>
        <shortName evidence="1">NAGK</shortName>
    </alternativeName>
</protein>